<reference key="1">
    <citation type="submission" date="2007-05" db="EMBL/GenBank/DDBJ databases">
        <title>Complete sequence of chromosome of Staphylococcus aureus subsp. aureus JH9.</title>
        <authorList>
            <consortium name="US DOE Joint Genome Institute"/>
            <person name="Copeland A."/>
            <person name="Lucas S."/>
            <person name="Lapidus A."/>
            <person name="Barry K."/>
            <person name="Detter J.C."/>
            <person name="Glavina del Rio T."/>
            <person name="Hammon N."/>
            <person name="Israni S."/>
            <person name="Pitluck S."/>
            <person name="Chain P."/>
            <person name="Malfatti S."/>
            <person name="Shin M."/>
            <person name="Vergez L."/>
            <person name="Schmutz J."/>
            <person name="Larimer F."/>
            <person name="Land M."/>
            <person name="Hauser L."/>
            <person name="Kyrpides N."/>
            <person name="Kim E."/>
            <person name="Tomasz A."/>
            <person name="Richardson P."/>
        </authorList>
    </citation>
    <scope>NUCLEOTIDE SEQUENCE [LARGE SCALE GENOMIC DNA]</scope>
    <source>
        <strain>JH9</strain>
    </source>
</reference>
<name>TRMFO_STAA9</name>
<organism>
    <name type="scientific">Staphylococcus aureus (strain JH9)</name>
    <dbReference type="NCBI Taxonomy" id="359786"/>
    <lineage>
        <taxon>Bacteria</taxon>
        <taxon>Bacillati</taxon>
        <taxon>Bacillota</taxon>
        <taxon>Bacilli</taxon>
        <taxon>Bacillales</taxon>
        <taxon>Staphylococcaceae</taxon>
        <taxon>Staphylococcus</taxon>
    </lineage>
</organism>
<protein>
    <recommendedName>
        <fullName evidence="1">Methylenetetrahydrofolate--tRNA-(uracil-5-)-methyltransferase TrmFO</fullName>
        <ecNumber evidence="1">2.1.1.74</ecNumber>
    </recommendedName>
    <alternativeName>
        <fullName evidence="1">Folate-dependent tRNA (uracil-5-)-methyltransferase</fullName>
    </alternativeName>
    <alternativeName>
        <fullName evidence="1">Folate-dependent tRNA(M-5-U54)-methyltransferase</fullName>
    </alternativeName>
</protein>
<keyword id="KW-0963">Cytoplasm</keyword>
<keyword id="KW-0274">FAD</keyword>
<keyword id="KW-0285">Flavoprotein</keyword>
<keyword id="KW-0489">Methyltransferase</keyword>
<keyword id="KW-0520">NAD</keyword>
<keyword id="KW-0521">NADP</keyword>
<keyword id="KW-0808">Transferase</keyword>
<keyword id="KW-0819">tRNA processing</keyword>
<gene>
    <name evidence="1" type="primary">trmFO</name>
    <name type="synonym">gid</name>
    <name type="ordered locus">SaurJH9_1311</name>
</gene>
<comment type="function">
    <text evidence="1">Catalyzes the folate-dependent formation of 5-methyl-uridine at position 54 (M-5-U54) in all tRNAs.</text>
</comment>
<comment type="catalytic activity">
    <reaction evidence="1">
        <text>uridine(54) in tRNA + (6R)-5,10-methylene-5,6,7,8-tetrahydrofolate + NADH + H(+) = 5-methyluridine(54) in tRNA + (6S)-5,6,7,8-tetrahydrofolate + NAD(+)</text>
        <dbReference type="Rhea" id="RHEA:16873"/>
        <dbReference type="Rhea" id="RHEA-COMP:10167"/>
        <dbReference type="Rhea" id="RHEA-COMP:10193"/>
        <dbReference type="ChEBI" id="CHEBI:15378"/>
        <dbReference type="ChEBI" id="CHEBI:15636"/>
        <dbReference type="ChEBI" id="CHEBI:57453"/>
        <dbReference type="ChEBI" id="CHEBI:57540"/>
        <dbReference type="ChEBI" id="CHEBI:57945"/>
        <dbReference type="ChEBI" id="CHEBI:65315"/>
        <dbReference type="ChEBI" id="CHEBI:74447"/>
        <dbReference type="EC" id="2.1.1.74"/>
    </reaction>
</comment>
<comment type="catalytic activity">
    <reaction evidence="1">
        <text>uridine(54) in tRNA + (6R)-5,10-methylene-5,6,7,8-tetrahydrofolate + NADPH + H(+) = 5-methyluridine(54) in tRNA + (6S)-5,6,7,8-tetrahydrofolate + NADP(+)</text>
        <dbReference type="Rhea" id="RHEA:62372"/>
        <dbReference type="Rhea" id="RHEA-COMP:10167"/>
        <dbReference type="Rhea" id="RHEA-COMP:10193"/>
        <dbReference type="ChEBI" id="CHEBI:15378"/>
        <dbReference type="ChEBI" id="CHEBI:15636"/>
        <dbReference type="ChEBI" id="CHEBI:57453"/>
        <dbReference type="ChEBI" id="CHEBI:57783"/>
        <dbReference type="ChEBI" id="CHEBI:58349"/>
        <dbReference type="ChEBI" id="CHEBI:65315"/>
        <dbReference type="ChEBI" id="CHEBI:74447"/>
        <dbReference type="EC" id="2.1.1.74"/>
    </reaction>
</comment>
<comment type="cofactor">
    <cofactor evidence="1">
        <name>FAD</name>
        <dbReference type="ChEBI" id="CHEBI:57692"/>
    </cofactor>
</comment>
<comment type="subcellular location">
    <subcellularLocation>
        <location evidence="1">Cytoplasm</location>
    </subcellularLocation>
</comment>
<comment type="similarity">
    <text evidence="1">Belongs to the MnmG family. TrmFO subfamily.</text>
</comment>
<proteinExistence type="inferred from homology"/>
<feature type="chain" id="PRO_1000084291" description="Methylenetetrahydrofolate--tRNA-(uracil-5-)-methyltransferase TrmFO">
    <location>
        <begin position="1"/>
        <end position="435"/>
    </location>
</feature>
<feature type="binding site" evidence="1">
    <location>
        <begin position="9"/>
        <end position="14"/>
    </location>
    <ligand>
        <name>FAD</name>
        <dbReference type="ChEBI" id="CHEBI:57692"/>
    </ligand>
</feature>
<dbReference type="EC" id="2.1.1.74" evidence="1"/>
<dbReference type="EMBL" id="CP000703">
    <property type="protein sequence ID" value="ABQ49108.1"/>
    <property type="molecule type" value="Genomic_DNA"/>
</dbReference>
<dbReference type="RefSeq" id="WP_000195255.1">
    <property type="nucleotide sequence ID" value="NC_009487.1"/>
</dbReference>
<dbReference type="SMR" id="A5ISD5"/>
<dbReference type="KEGG" id="saj:SaurJH9_1311"/>
<dbReference type="HOGENOM" id="CLU_033057_1_0_9"/>
<dbReference type="GO" id="GO:0005829">
    <property type="term" value="C:cytosol"/>
    <property type="evidence" value="ECO:0007669"/>
    <property type="project" value="TreeGrafter"/>
</dbReference>
<dbReference type="GO" id="GO:0050660">
    <property type="term" value="F:flavin adenine dinucleotide binding"/>
    <property type="evidence" value="ECO:0007669"/>
    <property type="project" value="UniProtKB-UniRule"/>
</dbReference>
<dbReference type="GO" id="GO:0047151">
    <property type="term" value="F:tRNA (uracil(54)-C5)-methyltransferase activity, 5,10-methylenetetrahydrofolate-dependent"/>
    <property type="evidence" value="ECO:0007669"/>
    <property type="project" value="UniProtKB-UniRule"/>
</dbReference>
<dbReference type="GO" id="GO:0030488">
    <property type="term" value="P:tRNA methylation"/>
    <property type="evidence" value="ECO:0007669"/>
    <property type="project" value="TreeGrafter"/>
</dbReference>
<dbReference type="GO" id="GO:0002098">
    <property type="term" value="P:tRNA wobble uridine modification"/>
    <property type="evidence" value="ECO:0007669"/>
    <property type="project" value="TreeGrafter"/>
</dbReference>
<dbReference type="FunFam" id="3.50.50.60:FF:000035">
    <property type="entry name" value="Methylenetetrahydrofolate--tRNA-(uracil-5-)-methyltransferase TrmFO"/>
    <property type="match status" value="1"/>
</dbReference>
<dbReference type="FunFam" id="3.50.50.60:FF:000040">
    <property type="entry name" value="Methylenetetrahydrofolate--tRNA-(uracil-5-)-methyltransferase TrmFO"/>
    <property type="match status" value="1"/>
</dbReference>
<dbReference type="Gene3D" id="3.50.50.60">
    <property type="entry name" value="FAD/NAD(P)-binding domain"/>
    <property type="match status" value="2"/>
</dbReference>
<dbReference type="HAMAP" id="MF_01037">
    <property type="entry name" value="TrmFO"/>
    <property type="match status" value="1"/>
</dbReference>
<dbReference type="InterPro" id="IPR036188">
    <property type="entry name" value="FAD/NAD-bd_sf"/>
</dbReference>
<dbReference type="InterPro" id="IPR002218">
    <property type="entry name" value="MnmG-rel"/>
</dbReference>
<dbReference type="InterPro" id="IPR020595">
    <property type="entry name" value="MnmG-rel_CS"/>
</dbReference>
<dbReference type="InterPro" id="IPR040131">
    <property type="entry name" value="MnmG_N"/>
</dbReference>
<dbReference type="InterPro" id="IPR004417">
    <property type="entry name" value="TrmFO"/>
</dbReference>
<dbReference type="NCBIfam" id="TIGR00137">
    <property type="entry name" value="gid_trmFO"/>
    <property type="match status" value="1"/>
</dbReference>
<dbReference type="NCBIfam" id="NF003739">
    <property type="entry name" value="PRK05335.1"/>
    <property type="match status" value="1"/>
</dbReference>
<dbReference type="PANTHER" id="PTHR11806">
    <property type="entry name" value="GLUCOSE INHIBITED DIVISION PROTEIN A"/>
    <property type="match status" value="1"/>
</dbReference>
<dbReference type="PANTHER" id="PTHR11806:SF2">
    <property type="entry name" value="METHYLENETETRAHYDROFOLATE--TRNA-(URACIL-5-)-METHYLTRANSFERASE TRMFO"/>
    <property type="match status" value="1"/>
</dbReference>
<dbReference type="Pfam" id="PF01134">
    <property type="entry name" value="GIDA"/>
    <property type="match status" value="1"/>
</dbReference>
<dbReference type="SUPFAM" id="SSF51905">
    <property type="entry name" value="FAD/NAD(P)-binding domain"/>
    <property type="match status" value="1"/>
</dbReference>
<dbReference type="PROSITE" id="PS01281">
    <property type="entry name" value="GIDA_2"/>
    <property type="match status" value="1"/>
</dbReference>
<accession>A5ISD5</accession>
<evidence type="ECO:0000255" key="1">
    <source>
        <dbReference type="HAMAP-Rule" id="MF_01037"/>
    </source>
</evidence>
<sequence>MTQTVNVIGAGLAGSEAAYQLAERGIKVNLIEMRPVKQTPAHHTDKFAELVCSNSLRGNALTNGVGVLKEEMRRLNSIIIEAADKARVPAGGALAVDRHDFSGYITETLKNHENITVINEEINAIPDGYTIIATGPLTTETLAQEIVDITGKDQLYFYDAAAPIIEKESIDMDKVYLKSRYDKGEAAYLNCPMTEDEFNRFYDAVLEAEVAPVNSFEKEKYFEGCMPFEVMAERGRKTLLFGPMKPVGLEDPKTGKRPYAVVQLRQDDAAGTLYNIVGFQTHLKWGAQKEVIKLIPGLENVDIVRYGVMHRNTFINSPDVLNEKYELISQPNIQFAGQMTGVEGYVESAASGLVAGINLAHKILGKGEVVFPRETMIGSMAYYISHAKNNKNFQPMNANFGLLPSLETRIKDKKERYEAQANRALDYLKNFKKTL</sequence>